<dbReference type="EMBL" id="CP000252">
    <property type="protein sequence ID" value="ABC76922.1"/>
    <property type="molecule type" value="Genomic_DNA"/>
</dbReference>
<dbReference type="RefSeq" id="WP_011416954.1">
    <property type="nucleotide sequence ID" value="NC_007759.1"/>
</dbReference>
<dbReference type="SMR" id="Q2LS66"/>
<dbReference type="FunCoup" id="Q2LS66">
    <property type="interactions" value="83"/>
</dbReference>
<dbReference type="STRING" id="56780.SYN_00393"/>
<dbReference type="KEGG" id="sat:SYN_00393"/>
<dbReference type="eggNOG" id="COG2827">
    <property type="taxonomic scope" value="Bacteria"/>
</dbReference>
<dbReference type="HOGENOM" id="CLU_135650_0_3_7"/>
<dbReference type="InParanoid" id="Q2LS66"/>
<dbReference type="OrthoDB" id="287318at2"/>
<dbReference type="Proteomes" id="UP000001933">
    <property type="component" value="Chromosome"/>
</dbReference>
<dbReference type="CDD" id="cd10456">
    <property type="entry name" value="GIY-YIG_UPF0213"/>
    <property type="match status" value="1"/>
</dbReference>
<dbReference type="Gene3D" id="3.40.1440.10">
    <property type="entry name" value="GIY-YIG endonuclease"/>
    <property type="match status" value="1"/>
</dbReference>
<dbReference type="InterPro" id="IPR000305">
    <property type="entry name" value="GIY-YIG_endonuc"/>
</dbReference>
<dbReference type="InterPro" id="IPR035901">
    <property type="entry name" value="GIY-YIG_endonuc_sf"/>
</dbReference>
<dbReference type="InterPro" id="IPR050190">
    <property type="entry name" value="UPF0213_domain"/>
</dbReference>
<dbReference type="PANTHER" id="PTHR34477">
    <property type="entry name" value="UPF0213 PROTEIN YHBQ"/>
    <property type="match status" value="1"/>
</dbReference>
<dbReference type="PANTHER" id="PTHR34477:SF1">
    <property type="entry name" value="UPF0213 PROTEIN YHBQ"/>
    <property type="match status" value="1"/>
</dbReference>
<dbReference type="Pfam" id="PF01541">
    <property type="entry name" value="GIY-YIG"/>
    <property type="match status" value="1"/>
</dbReference>
<dbReference type="SUPFAM" id="SSF82771">
    <property type="entry name" value="GIY-YIG endonuclease"/>
    <property type="match status" value="1"/>
</dbReference>
<dbReference type="PROSITE" id="PS50164">
    <property type="entry name" value="GIY_YIG"/>
    <property type="match status" value="1"/>
</dbReference>
<evidence type="ECO:0000255" key="1">
    <source>
        <dbReference type="PROSITE-ProRule" id="PRU00977"/>
    </source>
</evidence>
<evidence type="ECO:0000305" key="2"/>
<sequence length="87" mass="10216">MSKNYVYILECSDKTLYTGWTVNIEKRLQEHNSGKYGAKYTKSRRPVKLVHLEMVDSLSGVLKREAQIKKMSRAEKLQLIKQNPERM</sequence>
<feature type="chain" id="PRO_1000063698" description="UPF0213 protein SYNAS_10430">
    <location>
        <begin position="1"/>
        <end position="87"/>
    </location>
</feature>
<feature type="domain" description="GIY-YIG" evidence="1">
    <location>
        <begin position="2"/>
        <end position="78"/>
    </location>
</feature>
<name>Y1043_SYNAS</name>
<comment type="similarity">
    <text evidence="2">Belongs to the UPF0213 family.</text>
</comment>
<accession>Q2LS66</accession>
<keyword id="KW-1185">Reference proteome</keyword>
<reference key="1">
    <citation type="journal article" date="2007" name="Proc. Natl. Acad. Sci. U.S.A.">
        <title>The genome of Syntrophus aciditrophicus: life at the thermodynamic limit of microbial growth.</title>
        <authorList>
            <person name="McInerney M.J."/>
            <person name="Rohlin L."/>
            <person name="Mouttaki H."/>
            <person name="Kim U."/>
            <person name="Krupp R.S."/>
            <person name="Rios-Hernandez L."/>
            <person name="Sieber J."/>
            <person name="Struchtemeyer C.G."/>
            <person name="Bhattacharyya A."/>
            <person name="Campbell J.W."/>
            <person name="Gunsalus R.P."/>
        </authorList>
    </citation>
    <scope>NUCLEOTIDE SEQUENCE [LARGE SCALE GENOMIC DNA]</scope>
    <source>
        <strain>SB</strain>
    </source>
</reference>
<proteinExistence type="inferred from homology"/>
<gene>
    <name type="ordered locus">SYNAS_10430</name>
    <name type="ORF">SYN_00393</name>
</gene>
<protein>
    <recommendedName>
        <fullName>UPF0213 protein SYNAS_10430</fullName>
    </recommendedName>
</protein>
<organism>
    <name type="scientific">Syntrophus aciditrophicus (strain SB)</name>
    <dbReference type="NCBI Taxonomy" id="56780"/>
    <lineage>
        <taxon>Bacteria</taxon>
        <taxon>Pseudomonadati</taxon>
        <taxon>Thermodesulfobacteriota</taxon>
        <taxon>Syntrophia</taxon>
        <taxon>Syntrophales</taxon>
        <taxon>Syntrophaceae</taxon>
        <taxon>Syntrophus</taxon>
    </lineage>
</organism>